<name>RSMG_PSEP1</name>
<sequence>MSSLVTPQHAEELSTGARQLGVELTAEQHEKLLGYLALLIKWNKAYNLTAVRDPDEMVSRHLLDSLSVMSFIHNDRDNWLDVGSGGGMPGIPLAILHPHKRVTVLDANGKKTRFLTQVKMELKLDNLTVIHSRVEAFQPAQPFDGIISRAFSSMENFTNWTRHLGDTGTQWLAMKGLHPADELVALPADFTVESEQALTVPGCQGQRHLLILRRKA</sequence>
<keyword id="KW-0963">Cytoplasm</keyword>
<keyword id="KW-0489">Methyltransferase</keyword>
<keyword id="KW-0698">rRNA processing</keyword>
<keyword id="KW-0949">S-adenosyl-L-methionine</keyword>
<keyword id="KW-0808">Transferase</keyword>
<evidence type="ECO:0000255" key="1">
    <source>
        <dbReference type="HAMAP-Rule" id="MF_00074"/>
    </source>
</evidence>
<feature type="chain" id="PRO_1000010187" description="Ribosomal RNA small subunit methyltransferase G">
    <location>
        <begin position="1"/>
        <end position="216"/>
    </location>
</feature>
<feature type="binding site" evidence="1">
    <location>
        <position position="83"/>
    </location>
    <ligand>
        <name>S-adenosyl-L-methionine</name>
        <dbReference type="ChEBI" id="CHEBI:59789"/>
    </ligand>
</feature>
<feature type="binding site" evidence="1">
    <location>
        <position position="88"/>
    </location>
    <ligand>
        <name>S-adenosyl-L-methionine</name>
        <dbReference type="ChEBI" id="CHEBI:59789"/>
    </ligand>
</feature>
<feature type="binding site" evidence="1">
    <location>
        <begin position="134"/>
        <end position="135"/>
    </location>
    <ligand>
        <name>S-adenosyl-L-methionine</name>
        <dbReference type="ChEBI" id="CHEBI:59789"/>
    </ligand>
</feature>
<feature type="binding site" evidence="1">
    <location>
        <position position="149"/>
    </location>
    <ligand>
        <name>S-adenosyl-L-methionine</name>
        <dbReference type="ChEBI" id="CHEBI:59789"/>
    </ligand>
</feature>
<organism>
    <name type="scientific">Pseudomonas putida (strain ATCC 700007 / DSM 6899 / JCM 31910 / BCRC 17059 / LMG 24140 / F1)</name>
    <dbReference type="NCBI Taxonomy" id="351746"/>
    <lineage>
        <taxon>Bacteria</taxon>
        <taxon>Pseudomonadati</taxon>
        <taxon>Pseudomonadota</taxon>
        <taxon>Gammaproteobacteria</taxon>
        <taxon>Pseudomonadales</taxon>
        <taxon>Pseudomonadaceae</taxon>
        <taxon>Pseudomonas</taxon>
    </lineage>
</organism>
<comment type="function">
    <text evidence="1">Specifically methylates the N7 position of guanine in position 527 of 16S rRNA.</text>
</comment>
<comment type="catalytic activity">
    <reaction evidence="1">
        <text>guanosine(527) in 16S rRNA + S-adenosyl-L-methionine = N(7)-methylguanosine(527) in 16S rRNA + S-adenosyl-L-homocysteine</text>
        <dbReference type="Rhea" id="RHEA:42732"/>
        <dbReference type="Rhea" id="RHEA-COMP:10209"/>
        <dbReference type="Rhea" id="RHEA-COMP:10210"/>
        <dbReference type="ChEBI" id="CHEBI:57856"/>
        <dbReference type="ChEBI" id="CHEBI:59789"/>
        <dbReference type="ChEBI" id="CHEBI:74269"/>
        <dbReference type="ChEBI" id="CHEBI:74480"/>
        <dbReference type="EC" id="2.1.1.170"/>
    </reaction>
</comment>
<comment type="subcellular location">
    <subcellularLocation>
        <location evidence="1">Cytoplasm</location>
    </subcellularLocation>
</comment>
<comment type="similarity">
    <text evidence="1">Belongs to the methyltransferase superfamily. RNA methyltransferase RsmG family.</text>
</comment>
<accession>A5WBB3</accession>
<protein>
    <recommendedName>
        <fullName evidence="1">Ribosomal RNA small subunit methyltransferase G</fullName>
        <ecNumber evidence="1">2.1.1.170</ecNumber>
    </recommendedName>
    <alternativeName>
        <fullName evidence="1">16S rRNA 7-methylguanosine methyltransferase</fullName>
        <shortName evidence="1">16S rRNA m7G methyltransferase</shortName>
    </alternativeName>
</protein>
<dbReference type="EC" id="2.1.1.170" evidence="1"/>
<dbReference type="EMBL" id="CP000712">
    <property type="protein sequence ID" value="ABQ81423.1"/>
    <property type="molecule type" value="Genomic_DNA"/>
</dbReference>
<dbReference type="SMR" id="A5WBB3"/>
<dbReference type="KEGG" id="ppf:Pput_5305"/>
<dbReference type="eggNOG" id="COG0357">
    <property type="taxonomic scope" value="Bacteria"/>
</dbReference>
<dbReference type="HOGENOM" id="CLU_065341_2_0_6"/>
<dbReference type="GO" id="GO:0005829">
    <property type="term" value="C:cytosol"/>
    <property type="evidence" value="ECO:0007669"/>
    <property type="project" value="TreeGrafter"/>
</dbReference>
<dbReference type="GO" id="GO:0070043">
    <property type="term" value="F:rRNA (guanine-N7-)-methyltransferase activity"/>
    <property type="evidence" value="ECO:0007669"/>
    <property type="project" value="UniProtKB-UniRule"/>
</dbReference>
<dbReference type="CDD" id="cd02440">
    <property type="entry name" value="AdoMet_MTases"/>
    <property type="match status" value="1"/>
</dbReference>
<dbReference type="Gene3D" id="3.40.50.150">
    <property type="entry name" value="Vaccinia Virus protein VP39"/>
    <property type="match status" value="1"/>
</dbReference>
<dbReference type="HAMAP" id="MF_00074">
    <property type="entry name" value="16SrRNA_methyltr_G"/>
    <property type="match status" value="1"/>
</dbReference>
<dbReference type="InterPro" id="IPR003682">
    <property type="entry name" value="rRNA_ssu_MeTfrase_G"/>
</dbReference>
<dbReference type="InterPro" id="IPR029063">
    <property type="entry name" value="SAM-dependent_MTases_sf"/>
</dbReference>
<dbReference type="NCBIfam" id="TIGR00138">
    <property type="entry name" value="rsmG_gidB"/>
    <property type="match status" value="1"/>
</dbReference>
<dbReference type="PANTHER" id="PTHR31760">
    <property type="entry name" value="S-ADENOSYL-L-METHIONINE-DEPENDENT METHYLTRANSFERASES SUPERFAMILY PROTEIN"/>
    <property type="match status" value="1"/>
</dbReference>
<dbReference type="PANTHER" id="PTHR31760:SF0">
    <property type="entry name" value="S-ADENOSYL-L-METHIONINE-DEPENDENT METHYLTRANSFERASES SUPERFAMILY PROTEIN"/>
    <property type="match status" value="1"/>
</dbReference>
<dbReference type="Pfam" id="PF02527">
    <property type="entry name" value="GidB"/>
    <property type="match status" value="1"/>
</dbReference>
<dbReference type="PIRSF" id="PIRSF003078">
    <property type="entry name" value="GidB"/>
    <property type="match status" value="1"/>
</dbReference>
<dbReference type="SUPFAM" id="SSF53335">
    <property type="entry name" value="S-adenosyl-L-methionine-dependent methyltransferases"/>
    <property type="match status" value="1"/>
</dbReference>
<proteinExistence type="inferred from homology"/>
<reference key="1">
    <citation type="submission" date="2007-05" db="EMBL/GenBank/DDBJ databases">
        <title>Complete sequence of Pseudomonas putida F1.</title>
        <authorList>
            <consortium name="US DOE Joint Genome Institute"/>
            <person name="Copeland A."/>
            <person name="Lucas S."/>
            <person name="Lapidus A."/>
            <person name="Barry K."/>
            <person name="Detter J.C."/>
            <person name="Glavina del Rio T."/>
            <person name="Hammon N."/>
            <person name="Israni S."/>
            <person name="Dalin E."/>
            <person name="Tice H."/>
            <person name="Pitluck S."/>
            <person name="Chain P."/>
            <person name="Malfatti S."/>
            <person name="Shin M."/>
            <person name="Vergez L."/>
            <person name="Schmutz J."/>
            <person name="Larimer F."/>
            <person name="Land M."/>
            <person name="Hauser L."/>
            <person name="Kyrpides N."/>
            <person name="Lykidis A."/>
            <person name="Parales R."/>
            <person name="Richardson P."/>
        </authorList>
    </citation>
    <scope>NUCLEOTIDE SEQUENCE [LARGE SCALE GENOMIC DNA]</scope>
    <source>
        <strain>ATCC 700007 / DSM 6899 / JCM 31910 / BCRC 17059 / LMG 24140 / F1</strain>
    </source>
</reference>
<gene>
    <name evidence="1" type="primary">rsmG</name>
    <name type="ordered locus">Pput_5305</name>
</gene>